<feature type="chain" id="PRO_0000217404" description="Uncharacterized protein ycf72">
    <location>
        <begin position="1"/>
        <end position="137"/>
    </location>
</feature>
<reference key="1">
    <citation type="journal article" date="2004" name="Gene">
        <title>The complete nucleotide sequence of wild rice (Oryza nivara) chloroplast genome: first genome wide comparative sequence analysis of wild and cultivated rice.</title>
        <authorList>
            <person name="Masood M.S."/>
            <person name="Nishikawa T."/>
            <person name="Fukuoka S."/>
            <person name="Njenga P.K."/>
            <person name="Tsudzuki T."/>
            <person name="Kadowaki K."/>
        </authorList>
    </citation>
    <scope>NUCLEOTIDE SEQUENCE [LARGE SCALE GENOMIC DNA]</scope>
    <source>
        <strain evidence="2">cv. SL10</strain>
    </source>
</reference>
<organism>
    <name type="scientific">Oryza nivara</name>
    <name type="common">Indian wild rice</name>
    <name type="synonym">Oryza sativa f. spontanea</name>
    <dbReference type="NCBI Taxonomy" id="4536"/>
    <lineage>
        <taxon>Eukaryota</taxon>
        <taxon>Viridiplantae</taxon>
        <taxon>Streptophyta</taxon>
        <taxon>Embryophyta</taxon>
        <taxon>Tracheophyta</taxon>
        <taxon>Spermatophyta</taxon>
        <taxon>Magnoliopsida</taxon>
        <taxon>Liliopsida</taxon>
        <taxon>Poales</taxon>
        <taxon>Poaceae</taxon>
        <taxon>BOP clade</taxon>
        <taxon>Oryzoideae</taxon>
        <taxon>Oryzeae</taxon>
        <taxon>Oryzinae</taxon>
        <taxon>Oryza</taxon>
    </lineage>
</organism>
<protein>
    <recommendedName>
        <fullName>Uncharacterized protein ycf72</fullName>
    </recommendedName>
    <alternativeName>
        <fullName>ORF137</fullName>
    </alternativeName>
</protein>
<comment type="subcellular location">
    <subcellularLocation>
        <location>Plastid</location>
        <location>Chloroplast</location>
    </subcellularLocation>
</comment>
<comment type="similarity">
    <text evidence="1">Belongs to the ycf72 family.</text>
</comment>
<accession>Q6ENC9</accession>
<proteinExistence type="inferred from homology"/>
<geneLocation type="chloroplast"/>
<gene>
    <name type="primary">ycf72-1</name>
</gene>
<gene>
    <name type="primary">ycf72-2</name>
</gene>
<dbReference type="EMBL" id="AP006728">
    <property type="protein sequence ID" value="BAD26823.1"/>
    <property type="molecule type" value="Genomic_DNA"/>
</dbReference>
<dbReference type="EMBL" id="AP006728">
    <property type="protein sequence ID" value="BAD26870.1"/>
    <property type="molecule type" value="Genomic_DNA"/>
</dbReference>
<dbReference type="RefSeq" id="YP_052794.1">
    <property type="nucleotide sequence ID" value="NC_005973.1"/>
</dbReference>
<dbReference type="RefSeq" id="YP_052840.1">
    <property type="nucleotide sequence ID" value="NC_005973.1"/>
</dbReference>
<dbReference type="STRING" id="4536.Q6ENC9"/>
<dbReference type="Proteomes" id="UP000006591">
    <property type="component" value="Chloroplast"/>
</dbReference>
<dbReference type="GO" id="GO:0009507">
    <property type="term" value="C:chloroplast"/>
    <property type="evidence" value="ECO:0007669"/>
    <property type="project" value="UniProtKB-SubCell"/>
</dbReference>
<dbReference type="GO" id="GO:0009536">
    <property type="term" value="C:plastid"/>
    <property type="evidence" value="ECO:0000305"/>
    <property type="project" value="Gramene"/>
</dbReference>
<dbReference type="InterPro" id="IPR038860">
    <property type="entry name" value="YCF72"/>
</dbReference>
<dbReference type="PANTHER" id="PTHR37377">
    <property type="entry name" value="RIBULOSE BISPHOSPHATE CARBOXYLASE LARGE CHAIN"/>
    <property type="match status" value="1"/>
</dbReference>
<dbReference type="PANTHER" id="PTHR37377:SF2">
    <property type="entry name" value="SMALL RIBOSOMAL SUBUNIT PROTEIN US2C"/>
    <property type="match status" value="1"/>
</dbReference>
<evidence type="ECO:0000305" key="1"/>
<evidence type="ECO:0000312" key="2">
    <source>
        <dbReference type="Proteomes" id="UP000006591"/>
    </source>
</evidence>
<name>YCF72_ORYNI</name>
<keyword id="KW-0150">Chloroplast</keyword>
<keyword id="KW-0934">Plastid</keyword>
<keyword id="KW-1185">Reference proteome</keyword>
<sequence length="137" mass="14868">MGAFPSPPPWGWSTGFITTPLTTGRLPSQHLDPALPKLFWFTPTLPTCPTVAKQFWDTKRTSPDGNLKVADLPSFAISFATAPAALANCPPLPRVISMLCMAVPKGISVEVDSSFLSKNPFPNCTSFFQSIRLSRCI</sequence>